<name>ATPE_RUEST</name>
<keyword id="KW-0066">ATP synthesis</keyword>
<keyword id="KW-0997">Cell inner membrane</keyword>
<keyword id="KW-1003">Cell membrane</keyword>
<keyword id="KW-0139">CF(1)</keyword>
<keyword id="KW-0375">Hydrogen ion transport</keyword>
<keyword id="KW-0406">Ion transport</keyword>
<keyword id="KW-0472">Membrane</keyword>
<keyword id="KW-1185">Reference proteome</keyword>
<keyword id="KW-0813">Transport</keyword>
<organism>
    <name type="scientific">Ruegeria sp. (strain TM1040)</name>
    <name type="common">Silicibacter sp.</name>
    <dbReference type="NCBI Taxonomy" id="292414"/>
    <lineage>
        <taxon>Bacteria</taxon>
        <taxon>Pseudomonadati</taxon>
        <taxon>Pseudomonadota</taxon>
        <taxon>Alphaproteobacteria</taxon>
        <taxon>Rhodobacterales</taxon>
        <taxon>Roseobacteraceae</taxon>
        <taxon>Ruegeria</taxon>
    </lineage>
</organism>
<gene>
    <name evidence="1" type="primary">atpC</name>
    <name type="ordered locus">TM1040_2085</name>
</gene>
<accession>Q1GEU9</accession>
<comment type="function">
    <text evidence="1">Produces ATP from ADP in the presence of a proton gradient across the membrane.</text>
</comment>
<comment type="subunit">
    <text>F-type ATPases have 2 components, CF(1) - the catalytic core - and CF(0) - the membrane proton channel. CF(1) has five subunits: alpha(3), beta(3), gamma(1), delta(1), epsilon(1). CF(0) has three main subunits: a, b and c.</text>
</comment>
<comment type="subcellular location">
    <subcellularLocation>
        <location evidence="1">Cell inner membrane</location>
        <topology evidence="1">Peripheral membrane protein</topology>
    </subcellularLocation>
</comment>
<comment type="similarity">
    <text evidence="1">Belongs to the ATPase epsilon chain family.</text>
</comment>
<feature type="chain" id="PRO_0000265896" description="ATP synthase epsilon chain">
    <location>
        <begin position="1"/>
        <end position="137"/>
    </location>
</feature>
<reference key="1">
    <citation type="submission" date="2006-05" db="EMBL/GenBank/DDBJ databases">
        <title>Complete sequence of chromosome of Silicibacter sp. TM1040.</title>
        <authorList>
            <consortium name="US DOE Joint Genome Institute"/>
            <person name="Copeland A."/>
            <person name="Lucas S."/>
            <person name="Lapidus A."/>
            <person name="Barry K."/>
            <person name="Detter J.C."/>
            <person name="Glavina del Rio T."/>
            <person name="Hammon N."/>
            <person name="Israni S."/>
            <person name="Dalin E."/>
            <person name="Tice H."/>
            <person name="Pitluck S."/>
            <person name="Brettin T."/>
            <person name="Bruce D."/>
            <person name="Han C."/>
            <person name="Tapia R."/>
            <person name="Goodwin L."/>
            <person name="Thompson L.S."/>
            <person name="Gilna P."/>
            <person name="Schmutz J."/>
            <person name="Larimer F."/>
            <person name="Land M."/>
            <person name="Hauser L."/>
            <person name="Kyrpides N."/>
            <person name="Kim E."/>
            <person name="Belas R."/>
            <person name="Moran M.A."/>
            <person name="Buchan A."/>
            <person name="Gonzalez J.M."/>
            <person name="Schell M.A."/>
            <person name="Sun F."/>
            <person name="Richardson P."/>
        </authorList>
    </citation>
    <scope>NUCLEOTIDE SEQUENCE [LARGE SCALE GENOMIC DNA]</scope>
    <source>
        <strain>TM1040</strain>
    </source>
</reference>
<evidence type="ECO:0000255" key="1">
    <source>
        <dbReference type="HAMAP-Rule" id="MF_00530"/>
    </source>
</evidence>
<proteinExistence type="inferred from homology"/>
<sequence>MADTMQFDLVSPERSLASLQARAVQIPGAEGDMTAMPLHAPTLTTLRPGILKVDAPEGTTEYLVTGGFAQITAEGLSVLAERAIPMDEMTRAHLDELIEEARTMYKTAQEDNSEHGLVEDAAKMLADMEALGTHMSL</sequence>
<protein>
    <recommendedName>
        <fullName evidence="1">ATP synthase epsilon chain</fullName>
    </recommendedName>
    <alternativeName>
        <fullName evidence="1">ATP synthase F1 sector epsilon subunit</fullName>
    </alternativeName>
    <alternativeName>
        <fullName evidence="1">F-ATPase epsilon subunit</fullName>
    </alternativeName>
</protein>
<dbReference type="EMBL" id="CP000377">
    <property type="protein sequence ID" value="ABF64817.1"/>
    <property type="molecule type" value="Genomic_DNA"/>
</dbReference>
<dbReference type="RefSeq" id="WP_011539409.1">
    <property type="nucleotide sequence ID" value="NC_008044.1"/>
</dbReference>
<dbReference type="SMR" id="Q1GEU9"/>
<dbReference type="STRING" id="292414.TM1040_2085"/>
<dbReference type="KEGG" id="sit:TM1040_2085"/>
<dbReference type="eggNOG" id="COG0355">
    <property type="taxonomic scope" value="Bacteria"/>
</dbReference>
<dbReference type="HOGENOM" id="CLU_084338_2_1_5"/>
<dbReference type="OrthoDB" id="9799969at2"/>
<dbReference type="Proteomes" id="UP000000636">
    <property type="component" value="Chromosome"/>
</dbReference>
<dbReference type="GO" id="GO:0005886">
    <property type="term" value="C:plasma membrane"/>
    <property type="evidence" value="ECO:0007669"/>
    <property type="project" value="UniProtKB-SubCell"/>
</dbReference>
<dbReference type="GO" id="GO:0045259">
    <property type="term" value="C:proton-transporting ATP synthase complex"/>
    <property type="evidence" value="ECO:0007669"/>
    <property type="project" value="UniProtKB-KW"/>
</dbReference>
<dbReference type="GO" id="GO:0005524">
    <property type="term" value="F:ATP binding"/>
    <property type="evidence" value="ECO:0007669"/>
    <property type="project" value="UniProtKB-UniRule"/>
</dbReference>
<dbReference type="GO" id="GO:0046933">
    <property type="term" value="F:proton-transporting ATP synthase activity, rotational mechanism"/>
    <property type="evidence" value="ECO:0007669"/>
    <property type="project" value="UniProtKB-UniRule"/>
</dbReference>
<dbReference type="CDD" id="cd12152">
    <property type="entry name" value="F1-ATPase_delta"/>
    <property type="match status" value="1"/>
</dbReference>
<dbReference type="Gene3D" id="2.60.15.10">
    <property type="entry name" value="F0F1 ATP synthase delta/epsilon subunit, N-terminal"/>
    <property type="match status" value="1"/>
</dbReference>
<dbReference type="HAMAP" id="MF_00530">
    <property type="entry name" value="ATP_synth_epsil_bac"/>
    <property type="match status" value="1"/>
</dbReference>
<dbReference type="InterPro" id="IPR001469">
    <property type="entry name" value="ATP_synth_F1_dsu/esu"/>
</dbReference>
<dbReference type="InterPro" id="IPR020546">
    <property type="entry name" value="ATP_synth_F1_dsu/esu_N"/>
</dbReference>
<dbReference type="InterPro" id="IPR036771">
    <property type="entry name" value="ATPsynth_dsu/esu_N"/>
</dbReference>
<dbReference type="NCBIfam" id="TIGR01216">
    <property type="entry name" value="ATP_synt_epsi"/>
    <property type="match status" value="1"/>
</dbReference>
<dbReference type="NCBIfam" id="NF009978">
    <property type="entry name" value="PRK13443.1"/>
    <property type="match status" value="1"/>
</dbReference>
<dbReference type="PANTHER" id="PTHR13822">
    <property type="entry name" value="ATP SYNTHASE DELTA/EPSILON CHAIN"/>
    <property type="match status" value="1"/>
</dbReference>
<dbReference type="PANTHER" id="PTHR13822:SF10">
    <property type="entry name" value="ATP SYNTHASE EPSILON CHAIN, CHLOROPLASTIC"/>
    <property type="match status" value="1"/>
</dbReference>
<dbReference type="Pfam" id="PF02823">
    <property type="entry name" value="ATP-synt_DE_N"/>
    <property type="match status" value="1"/>
</dbReference>
<dbReference type="SUPFAM" id="SSF51344">
    <property type="entry name" value="Epsilon subunit of F1F0-ATP synthase N-terminal domain"/>
    <property type="match status" value="1"/>
</dbReference>